<evidence type="ECO:0000255" key="1"/>
<evidence type="ECO:0000269" key="2">
    <source>
    </source>
</evidence>
<evidence type="ECO:0000303" key="3">
    <source>
    </source>
</evidence>
<evidence type="ECO:0000305" key="4">
    <source>
    </source>
</evidence>
<evidence type="ECO:0000312" key="5">
    <source>
        <dbReference type="PDB" id="6MRQ"/>
    </source>
</evidence>
<evidence type="ECO:0007744" key="6">
    <source>
        <dbReference type="PDB" id="6MRQ"/>
    </source>
</evidence>
<dbReference type="EMBL" id="LR594010">
    <property type="status" value="NOT_ANNOTATED_CDS"/>
    <property type="molecule type" value="mRNA"/>
</dbReference>
<dbReference type="PDB" id="6MRQ">
    <property type="method" value="X-ray"/>
    <property type="resolution" value="1.29 A"/>
    <property type="chains" value="I=24-55"/>
</dbReference>
<dbReference type="PDBsum" id="6MRQ"/>
<dbReference type="SMR" id="A0A6P3CW73"/>
<dbReference type="GO" id="GO:0005576">
    <property type="term" value="C:extracellular region"/>
    <property type="evidence" value="ECO:0007669"/>
    <property type="project" value="UniProtKB-SubCell"/>
</dbReference>
<dbReference type="GO" id="GO:0004867">
    <property type="term" value="F:serine-type endopeptidase inhibitor activity"/>
    <property type="evidence" value="ECO:0007669"/>
    <property type="project" value="UniProtKB-KW"/>
</dbReference>
<accession>A0A6P3CW73</accession>
<comment type="function">
    <text evidence="2">First cyclic scorpion trypsin inhibitor (Kd~0.5 nM). Does not inhibit chymotrypsin.</text>
</comment>
<comment type="biophysicochemical properties">
    <temperatureDependence>
        <text evidence="2">Is very stable at high temperature.</text>
    </temperatureDependence>
</comment>
<comment type="subcellular location">
    <subcellularLocation>
        <location evidence="2">Secreted</location>
    </subcellularLocation>
</comment>
<comment type="tissue specificity">
    <text evidence="4">Expressed by the venom gland.</text>
</comment>
<comment type="domain">
    <text evidence="4">Has the structural arrangement of an alpha-helix connected to antiparallel beta-sheets by disulfide bonds (CS-alpha/beta).</text>
</comment>
<comment type="PTM">
    <text evidence="2">This is a cyclic peptide.</text>
</comment>
<comment type="mass spectrometry"/>
<comment type="miscellaneous">
    <text evidence="4">Trypsin inhibitor cleavage and cyclization are only observed in the presence of trypsin. It is suggested that the inhibitor Lys-55 is placed in the S1 pocket of trypsin, its C-terminal residue Ser-56 is cleaved, and the cyclization occurs via a peptide bond between residues Ile-24 and Lys-55.</text>
</comment>
<comment type="miscellaneous">
    <text evidence="2">Negative results: does not show activity on voltage-gated potassium channels (hKv1.1/KCNA1, hKv1.4/KCNA4, Kv10.1/KCNH1/EAG1, hKv11.1/KCNH2/ERG1, hKv11.2/KCNH6/ERG2, and hKv11.2/KCNH6/ERG2).</text>
</comment>
<organism>
    <name type="scientific">Tityus obscurus</name>
    <name type="common">Amazonian scorpion</name>
    <name type="synonym">Tityus cambridgei</name>
    <dbReference type="NCBI Taxonomy" id="1221240"/>
    <lineage>
        <taxon>Eukaryota</taxon>
        <taxon>Metazoa</taxon>
        <taxon>Ecdysozoa</taxon>
        <taxon>Arthropoda</taxon>
        <taxon>Chelicerata</taxon>
        <taxon>Arachnida</taxon>
        <taxon>Scorpiones</taxon>
        <taxon>Buthida</taxon>
        <taxon>Buthoidea</taxon>
        <taxon>Buthidae</taxon>
        <taxon>Tityus</taxon>
    </lineage>
</organism>
<proteinExistence type="evidence at protein level"/>
<name>CYCTI_TITOB</name>
<protein>
    <recommendedName>
        <fullName evidence="3">Cyclotide trypsin inhibitor TopI1</fullName>
    </recommendedName>
</protein>
<feature type="signal peptide" evidence="1">
    <location>
        <begin position="1"/>
        <end position="23"/>
    </location>
</feature>
<feature type="chain" id="PRO_0000454975" description="Cyclotide trypsin inhibitor TopI1" evidence="2">
    <location>
        <begin position="24"/>
        <end position="56"/>
    </location>
</feature>
<feature type="site" description="Cleavage; by trypsin" evidence="4">
    <location>
        <begin position="55"/>
        <end position="56"/>
    </location>
</feature>
<feature type="site" description="Binds trypsin" evidence="2">
    <location>
        <position position="55"/>
    </location>
</feature>
<feature type="modified residue" description="Serine amide" evidence="2">
    <location>
        <position position="56"/>
    </location>
</feature>
<feature type="disulfide bond" evidence="2 6">
    <location>
        <begin position="28"/>
        <end position="45"/>
    </location>
</feature>
<feature type="disulfide bond" evidence="2 6">
    <location>
        <begin position="34"/>
        <end position="50"/>
    </location>
</feature>
<feature type="disulfide bond" evidence="2 6">
    <location>
        <begin position="38"/>
        <end position="52"/>
    </location>
</feature>
<feature type="cross-link" description="Cyclopeptide (Ile-Lys)" evidence="2">
    <location>
        <begin position="24"/>
        <end position="55"/>
    </location>
</feature>
<feature type="mutagenesis site" description="No change in trypsin inhibition. At very high concentrations (20 uM), small decrease in hKv1.1/KCNA1 inhibition." evidence="2">
    <original>K</original>
    <variation>A</variation>
    <location>
        <position position="44"/>
    </location>
</feature>
<reference evidence="5" key="1">
    <citation type="journal article" date="2020" name="J. Med. Chem.">
        <title>Head-to-Tail Cyclization after Interaction with Trypsin: A Scorpion Venom Peptide that Resembles Plant Cyclotides.</title>
        <authorList>
            <person name="Mourao C.B.F."/>
            <person name="Brand G.D."/>
            <person name="Fernandes J.P.C."/>
            <person name="Prates M.V."/>
            <person name="Bloch C. Jr."/>
            <person name="Barbosa J.A.R.G."/>
            <person name="Freitas S.M."/>
            <person name="Restano-Cassulini R."/>
            <person name="Possani L.D."/>
            <person name="Schwartz E.F."/>
        </authorList>
    </citation>
    <scope>NUCLEOTIDE SEQUENCE [MRNA]</scope>
    <scope>PROTEIN SEQUENCE OF 32-52</scope>
    <scope>SUBCELLULAR LOCATION</scope>
    <scope>MASS SPECTROMETRY</scope>
    <scope>FUNCTION</scope>
    <scope>X-RAY CRYSTALLOGRAPHY (1.29 ANGSTROMS) OF 24-55 IN COMPLEX WITH TRYPSIN</scope>
    <scope>DISULFIDE BONDS</scope>
    <scope>AMIDATION AT SER-56</scope>
    <scope>BIOPHYSICOCHEMICAL PROPERTIES</scope>
    <scope>MUTAGENESIS OF LYS-44</scope>
    <scope>CROSS-LINK</scope>
    <scope>CYCLIZATION</scope>
    <scope>SYNTHESIS OF 24-55</scope>
    <source>
        <tissue>Telson</tissue>
    </source>
</reference>
<sequence>MKFIIVLLLLTALTLTSIPVIEGILKRCKTYDDCKDVCKARKGKCEFGICKCMIKSGK</sequence>
<keyword id="KW-0002">3D-structure</keyword>
<keyword id="KW-0027">Amidation</keyword>
<keyword id="KW-0903">Direct protein sequencing</keyword>
<keyword id="KW-1015">Disulfide bond</keyword>
<keyword id="KW-0960">Knottin</keyword>
<keyword id="KW-0646">Protease inhibitor</keyword>
<keyword id="KW-0964">Secreted</keyword>
<keyword id="KW-0722">Serine protease inhibitor</keyword>
<keyword id="KW-0732">Signal</keyword>